<feature type="chain" id="PRO_0000097019" description="Sec translocon accessory complex subunit YajC">
    <location>
        <begin position="1"/>
        <end position="88"/>
    </location>
</feature>
<feature type="transmembrane region" description="Helical" evidence="2">
    <location>
        <begin position="3"/>
        <end position="23"/>
    </location>
</feature>
<evidence type="ECO:0000250" key="1">
    <source>
        <dbReference type="UniProtKB" id="P0ADZ7"/>
    </source>
</evidence>
<evidence type="ECO:0000255" key="2"/>
<evidence type="ECO:0000305" key="3"/>
<dbReference type="EMBL" id="BA000004">
    <property type="protein sequence ID" value="BAB04948.1"/>
    <property type="molecule type" value="Genomic_DNA"/>
</dbReference>
<dbReference type="PIR" id="E83803">
    <property type="entry name" value="E83803"/>
</dbReference>
<dbReference type="RefSeq" id="WP_010897397.1">
    <property type="nucleotide sequence ID" value="NC_002570.2"/>
</dbReference>
<dbReference type="SMR" id="Q9KDI4"/>
<dbReference type="STRING" id="272558.gene:10727123"/>
<dbReference type="GeneID" id="87596848"/>
<dbReference type="KEGG" id="bha:BH1229"/>
<dbReference type="eggNOG" id="COG1862">
    <property type="taxonomic scope" value="Bacteria"/>
</dbReference>
<dbReference type="HOGENOM" id="CLU_116157_5_2_9"/>
<dbReference type="OrthoDB" id="9800132at2"/>
<dbReference type="Proteomes" id="UP000001258">
    <property type="component" value="Chromosome"/>
</dbReference>
<dbReference type="GO" id="GO:0005886">
    <property type="term" value="C:plasma membrane"/>
    <property type="evidence" value="ECO:0007669"/>
    <property type="project" value="UniProtKB-SubCell"/>
</dbReference>
<dbReference type="GO" id="GO:0015031">
    <property type="term" value="P:protein transport"/>
    <property type="evidence" value="ECO:0007669"/>
    <property type="project" value="UniProtKB-KW"/>
</dbReference>
<dbReference type="InterPro" id="IPR003849">
    <property type="entry name" value="Preprotein_translocase_YajC"/>
</dbReference>
<dbReference type="NCBIfam" id="TIGR00739">
    <property type="entry name" value="yajC"/>
    <property type="match status" value="1"/>
</dbReference>
<dbReference type="PANTHER" id="PTHR33909">
    <property type="entry name" value="SEC TRANSLOCON ACCESSORY COMPLEX SUBUNIT YAJC"/>
    <property type="match status" value="1"/>
</dbReference>
<dbReference type="PANTHER" id="PTHR33909:SF1">
    <property type="entry name" value="SEC TRANSLOCON ACCESSORY COMPLEX SUBUNIT YAJC"/>
    <property type="match status" value="1"/>
</dbReference>
<dbReference type="Pfam" id="PF02699">
    <property type="entry name" value="YajC"/>
    <property type="match status" value="1"/>
</dbReference>
<dbReference type="PRINTS" id="PR01853">
    <property type="entry name" value="YAJCTRNLCASE"/>
</dbReference>
<dbReference type="SMART" id="SM01323">
    <property type="entry name" value="YajC"/>
    <property type="match status" value="1"/>
</dbReference>
<organism>
    <name type="scientific">Halalkalibacterium halodurans (strain ATCC BAA-125 / DSM 18197 / FERM 7344 / JCM 9153 / C-125)</name>
    <name type="common">Bacillus halodurans</name>
    <dbReference type="NCBI Taxonomy" id="272558"/>
    <lineage>
        <taxon>Bacteria</taxon>
        <taxon>Bacillati</taxon>
        <taxon>Bacillota</taxon>
        <taxon>Bacilli</taxon>
        <taxon>Bacillales</taxon>
        <taxon>Bacillaceae</taxon>
        <taxon>Halalkalibacterium (ex Joshi et al. 2022)</taxon>
    </lineage>
</organism>
<proteinExistence type="inferred from homology"/>
<gene>
    <name type="primary">yajC</name>
    <name type="ordered locus">BH1229</name>
</gene>
<reference key="1">
    <citation type="journal article" date="2000" name="Nucleic Acids Res.">
        <title>Complete genome sequence of the alkaliphilic bacterium Bacillus halodurans and genomic sequence comparison with Bacillus subtilis.</title>
        <authorList>
            <person name="Takami H."/>
            <person name="Nakasone K."/>
            <person name="Takaki Y."/>
            <person name="Maeno G."/>
            <person name="Sasaki R."/>
            <person name="Masui N."/>
            <person name="Fuji F."/>
            <person name="Hirama C."/>
            <person name="Nakamura Y."/>
            <person name="Ogasawara N."/>
            <person name="Kuhara S."/>
            <person name="Horikoshi K."/>
        </authorList>
    </citation>
    <scope>NUCLEOTIDE SEQUENCE [LARGE SCALE GENOMIC DNA]</scope>
    <source>
        <strain>ATCC BAA-125 / DSM 18197 / FERM 7344 / JCM 9153 / C-125</strain>
    </source>
</reference>
<comment type="function">
    <text evidence="1">The SecYEG-SecDF-YajC-YidC holo-translocon (HTL) protein secretase/insertase is a supercomplex required for protein secretion, insertion of proteins into membranes, and assembly of membrane protein complexes. While the SecYEG complex is essential for assembly of a number of proteins and complexes, the SecDF-YajC-YidC subcomplex facilitates these functions.</text>
</comment>
<comment type="subunit">
    <text evidence="1">Part of the SecDF-YidC-YajC translocase complex. The SecDF-YidC-YajC translocase forms a supercomplex with SecYEG, called the holo-translocon (HTL).</text>
</comment>
<comment type="subcellular location">
    <subcellularLocation>
        <location evidence="3">Cell membrane</location>
        <topology evidence="3">Single-pass membrane protein</topology>
    </subcellularLocation>
</comment>
<comment type="similarity">
    <text evidence="3">Belongs to the YajC family.</text>
</comment>
<keyword id="KW-1003">Cell membrane</keyword>
<keyword id="KW-0472">Membrane</keyword>
<keyword id="KW-0653">Protein transport</keyword>
<keyword id="KW-1185">Reference proteome</keyword>
<keyword id="KW-0811">Translocation</keyword>
<keyword id="KW-0812">Transmembrane</keyword>
<keyword id="KW-1133">Transmembrane helix</keyword>
<keyword id="KW-0813">Transport</keyword>
<sequence>MEGLGGFLIPLILMFAIFYFLLIRPQQKRQKQIQEMHNNLQRGDKIVTIGGLHGTIDSLDESTVVILVNDNRKLTFDRSAIREVVNPD</sequence>
<accession>Q9KDI4</accession>
<protein>
    <recommendedName>
        <fullName>Sec translocon accessory complex subunit YajC</fullName>
    </recommendedName>
</protein>
<name>YAJC_HALH5</name>